<protein>
    <recommendedName>
        <fullName>Procollagen C-endopeptidase enhancer 1</fullName>
    </recommendedName>
    <alternativeName>
        <fullName>Procollagen COOH-terminal proteinase enhancer 1</fullName>
        <shortName>PCPE-1</shortName>
        <shortName>Procollagen C-proteinase enhancer 1</shortName>
    </alternativeName>
    <alternativeName>
        <fullName>Type 1 procollagen C-proteinase enhancer protein</fullName>
    </alternativeName>
    <alternativeName>
        <fullName>Type I procollagen COOH-terminal proteinase enhancer</fullName>
    </alternativeName>
</protein>
<organism>
    <name type="scientific">Rattus norvegicus</name>
    <name type="common">Rat</name>
    <dbReference type="NCBI Taxonomy" id="10116"/>
    <lineage>
        <taxon>Eukaryota</taxon>
        <taxon>Metazoa</taxon>
        <taxon>Chordata</taxon>
        <taxon>Craniata</taxon>
        <taxon>Vertebrata</taxon>
        <taxon>Euteleostomi</taxon>
        <taxon>Mammalia</taxon>
        <taxon>Eutheria</taxon>
        <taxon>Euarchontoglires</taxon>
        <taxon>Glires</taxon>
        <taxon>Rodentia</taxon>
        <taxon>Myomorpha</taxon>
        <taxon>Muroidea</taxon>
        <taxon>Muridae</taxon>
        <taxon>Murinae</taxon>
        <taxon>Rattus</taxon>
    </lineage>
</organism>
<name>PCOC1_RAT</name>
<gene>
    <name type="primary">Pcolce</name>
    <name type="synonym">Pcpe1</name>
</gene>
<feature type="signal peptide" evidence="3">
    <location>
        <begin position="1"/>
        <end position="24"/>
    </location>
</feature>
<feature type="chain" id="PRO_0000022025" description="Procollagen C-endopeptidase enhancer 1">
    <location>
        <begin position="25"/>
        <end position="468"/>
    </location>
</feature>
<feature type="domain" description="CUB 1" evidence="4">
    <location>
        <begin position="36"/>
        <end position="148"/>
    </location>
</feature>
<feature type="domain" description="CUB 2" evidence="4">
    <location>
        <begin position="158"/>
        <end position="272"/>
    </location>
</feature>
<feature type="domain" description="NTR" evidence="5">
    <location>
        <begin position="341"/>
        <end position="460"/>
    </location>
</feature>
<feature type="region of interest" description="Disordered" evidence="6">
    <location>
        <begin position="271"/>
        <end position="341"/>
    </location>
</feature>
<feature type="compositionally biased region" description="Basic and acidic residues" evidence="6">
    <location>
        <begin position="272"/>
        <end position="281"/>
    </location>
</feature>
<feature type="modified residue" description="Phosphothreonine" evidence="8">
    <location>
        <position position="41"/>
    </location>
</feature>
<feature type="modified residue" description="Phosphoserine" evidence="8">
    <location>
        <position position="49"/>
    </location>
</feature>
<feature type="glycosylation site" description="N-linked (GlcNAc...) asparagine" evidence="3">
    <location>
        <position position="28"/>
    </location>
</feature>
<feature type="glycosylation site" description="N-linked (GlcNAc...) asparagine" evidence="3">
    <location>
        <position position="454"/>
    </location>
</feature>
<feature type="disulfide bond" evidence="4">
    <location>
        <begin position="36"/>
        <end position="62"/>
    </location>
</feature>
<feature type="disulfide bond" evidence="4">
    <location>
        <begin position="89"/>
        <end position="111"/>
    </location>
</feature>
<feature type="disulfide bond" evidence="4">
    <location>
        <begin position="158"/>
        <end position="185"/>
    </location>
</feature>
<feature type="disulfide bond" evidence="4">
    <location>
        <begin position="212"/>
        <end position="235"/>
    </location>
</feature>
<feature type="disulfide bond" evidence="1">
    <location>
        <begin position="341"/>
        <end position="409"/>
    </location>
</feature>
<feature type="disulfide bond" evidence="1">
    <location>
        <begin position="356"/>
        <end position="460"/>
    </location>
</feature>
<proteinExistence type="evidence at protein level"/>
<dbReference type="EMBL" id="U94710">
    <property type="protein sequence ID" value="AAB93478.1"/>
    <property type="molecule type" value="mRNA"/>
</dbReference>
<dbReference type="EMBL" id="AB008534">
    <property type="protein sequence ID" value="BAA23217.1"/>
    <property type="molecule type" value="mRNA"/>
</dbReference>
<dbReference type="EMBL" id="AF016503">
    <property type="protein sequence ID" value="AAD01592.1"/>
    <property type="molecule type" value="mRNA"/>
</dbReference>
<dbReference type="EMBL" id="AF016506">
    <property type="protein sequence ID" value="AAD01598.1"/>
    <property type="molecule type" value="Genomic_DNA"/>
</dbReference>
<dbReference type="RefSeq" id="NP_062110.1">
    <property type="nucleotide sequence ID" value="NM_019237.1"/>
</dbReference>
<dbReference type="SMR" id="O08628"/>
<dbReference type="FunCoup" id="O08628">
    <property type="interactions" value="379"/>
</dbReference>
<dbReference type="STRING" id="10116.ENSRNOP00000073700"/>
<dbReference type="GlyCosmos" id="O08628">
    <property type="glycosylation" value="2 sites, No reported glycans"/>
</dbReference>
<dbReference type="GlyGen" id="O08628">
    <property type="glycosylation" value="2 sites"/>
</dbReference>
<dbReference type="iPTMnet" id="O08628"/>
<dbReference type="PhosphoSitePlus" id="O08628"/>
<dbReference type="PaxDb" id="10116-ENSRNOP00000001887"/>
<dbReference type="GeneID" id="29569"/>
<dbReference type="KEGG" id="rno:29569"/>
<dbReference type="UCSC" id="RGD:3270">
    <property type="organism name" value="rat"/>
</dbReference>
<dbReference type="AGR" id="RGD:3270"/>
<dbReference type="CTD" id="5118"/>
<dbReference type="RGD" id="3270">
    <property type="gene designation" value="Pcolce"/>
</dbReference>
<dbReference type="VEuPathDB" id="HostDB:ENSRNOG00000025001"/>
<dbReference type="eggNOG" id="ENOG502QTZ9">
    <property type="taxonomic scope" value="Eukaryota"/>
</dbReference>
<dbReference type="InParanoid" id="O08628"/>
<dbReference type="OrthoDB" id="50003at9989"/>
<dbReference type="Reactome" id="R-RNO-1650814">
    <property type="pathway name" value="Collagen biosynthesis and modifying enzymes"/>
</dbReference>
<dbReference type="Reactome" id="R-RNO-2243919">
    <property type="pathway name" value="Crosslinking of collagen fibrils"/>
</dbReference>
<dbReference type="PRO" id="PR:O08628"/>
<dbReference type="Proteomes" id="UP000002494">
    <property type="component" value="Chromosome 12"/>
</dbReference>
<dbReference type="Bgee" id="ENSRNOG00000025001">
    <property type="expression patterns" value="Expressed in ovary and 19 other cell types or tissues"/>
</dbReference>
<dbReference type="ExpressionAtlas" id="O08628">
    <property type="expression patterns" value="baseline and differential"/>
</dbReference>
<dbReference type="GO" id="GO:0005576">
    <property type="term" value="C:extracellular region"/>
    <property type="evidence" value="ECO:0007669"/>
    <property type="project" value="UniProtKB-SubCell"/>
</dbReference>
<dbReference type="GO" id="GO:0005518">
    <property type="term" value="F:collagen binding"/>
    <property type="evidence" value="ECO:0000266"/>
    <property type="project" value="RGD"/>
</dbReference>
<dbReference type="GO" id="GO:0008201">
    <property type="term" value="F:heparin binding"/>
    <property type="evidence" value="ECO:0000266"/>
    <property type="project" value="RGD"/>
</dbReference>
<dbReference type="GO" id="GO:0016504">
    <property type="term" value="F:peptidase activator activity"/>
    <property type="evidence" value="ECO:0000266"/>
    <property type="project" value="RGD"/>
</dbReference>
<dbReference type="GO" id="GO:1990830">
    <property type="term" value="P:cellular response to leukemia inhibitory factor"/>
    <property type="evidence" value="ECO:0000266"/>
    <property type="project" value="RGD"/>
</dbReference>
<dbReference type="GO" id="GO:0006508">
    <property type="term" value="P:proteolysis"/>
    <property type="evidence" value="ECO:0000266"/>
    <property type="project" value="RGD"/>
</dbReference>
<dbReference type="CDD" id="cd00041">
    <property type="entry name" value="CUB"/>
    <property type="match status" value="2"/>
</dbReference>
<dbReference type="CDD" id="cd03576">
    <property type="entry name" value="NTR_PCOLCE"/>
    <property type="match status" value="1"/>
</dbReference>
<dbReference type="FunFam" id="2.60.120.290:FF:000005">
    <property type="entry name" value="Procollagen C-endopeptidase enhancer 1"/>
    <property type="match status" value="1"/>
</dbReference>
<dbReference type="FunFam" id="2.60.120.290:FF:000026">
    <property type="entry name" value="Procollagen C-endopeptidase enhancer 2"/>
    <property type="match status" value="1"/>
</dbReference>
<dbReference type="Gene3D" id="2.40.50.120">
    <property type="match status" value="1"/>
</dbReference>
<dbReference type="Gene3D" id="2.60.120.290">
    <property type="entry name" value="Spermadhesin, CUB domain"/>
    <property type="match status" value="2"/>
</dbReference>
<dbReference type="InterPro" id="IPR000859">
    <property type="entry name" value="CUB_dom"/>
</dbReference>
<dbReference type="InterPro" id="IPR001134">
    <property type="entry name" value="Netrin_domain"/>
</dbReference>
<dbReference type="InterPro" id="IPR018933">
    <property type="entry name" value="Netrin_module_non-TIMP"/>
</dbReference>
<dbReference type="InterPro" id="IPR035814">
    <property type="entry name" value="NTR_PCOLCE"/>
</dbReference>
<dbReference type="InterPro" id="IPR035914">
    <property type="entry name" value="Sperma_CUB_dom_sf"/>
</dbReference>
<dbReference type="InterPro" id="IPR008993">
    <property type="entry name" value="TIMP-like_OB-fold"/>
</dbReference>
<dbReference type="PANTHER" id="PTHR24251">
    <property type="entry name" value="OVOCHYMASE-RELATED"/>
    <property type="match status" value="1"/>
</dbReference>
<dbReference type="PANTHER" id="PTHR24251:SF24">
    <property type="entry name" value="PROCOLLAGEN C-ENDOPEPTIDASE ENHANCER 1"/>
    <property type="match status" value="1"/>
</dbReference>
<dbReference type="Pfam" id="PF00431">
    <property type="entry name" value="CUB"/>
    <property type="match status" value="2"/>
</dbReference>
<dbReference type="Pfam" id="PF01759">
    <property type="entry name" value="NTR"/>
    <property type="match status" value="1"/>
</dbReference>
<dbReference type="SMART" id="SM00643">
    <property type="entry name" value="C345C"/>
    <property type="match status" value="1"/>
</dbReference>
<dbReference type="SMART" id="SM00042">
    <property type="entry name" value="CUB"/>
    <property type="match status" value="2"/>
</dbReference>
<dbReference type="SUPFAM" id="SSF49854">
    <property type="entry name" value="Spermadhesin, CUB domain"/>
    <property type="match status" value="2"/>
</dbReference>
<dbReference type="SUPFAM" id="SSF50242">
    <property type="entry name" value="TIMP-like"/>
    <property type="match status" value="1"/>
</dbReference>
<dbReference type="PROSITE" id="PS01180">
    <property type="entry name" value="CUB"/>
    <property type="match status" value="2"/>
</dbReference>
<dbReference type="PROSITE" id="PS50189">
    <property type="entry name" value="NTR"/>
    <property type="match status" value="1"/>
</dbReference>
<comment type="function">
    <text>Binds to the C-terminal propeptide of type I procollagen and enhances procollagen C-proteinase activity.</text>
</comment>
<comment type="subunit">
    <text evidence="2">Interacts with EFEMP2.</text>
</comment>
<comment type="subcellular location">
    <subcellularLocation>
        <location>Secreted</location>
    </subcellularLocation>
</comment>
<comment type="tissue specificity">
    <text evidence="7">Expressed at highest levels in collagen-rich tissues, especially tendon. Also expressed in cornea and sterna.</text>
</comment>
<reference key="1">
    <citation type="journal article" date="1997" name="Hepatology">
        <title>Up-regulation of type I procollagen C-proteinase enhancer protein messenger RNA in rats with CCl4-induced liver fibrosis.</title>
        <authorList>
            <person name="Ogata I."/>
            <person name="Auster A.S."/>
            <person name="Matsui A."/>
            <person name="Greenwel P."/>
            <person name="Geerts A."/>
            <person name="D'Amico T."/>
            <person name="Fujiwara K."/>
            <person name="Kessler E."/>
            <person name="Rojkind M."/>
        </authorList>
    </citation>
    <scope>NUCLEOTIDE SEQUENCE [MRNA]</scope>
    <source>
        <strain>Wistar</strain>
    </source>
</reference>
<reference key="2">
    <citation type="journal article" date="1996" name="Cell Struct. Funct.">
        <title>Smooth muscle cell derived procollagen C-protease enhancer protein.</title>
        <authorList>
            <person name="Hirahara I."/>
            <person name="Syoufuda K."/>
            <person name="Harada K."/>
            <person name="Tomita M."/>
            <person name="Urakami K."/>
            <person name="Terai H."/>
            <person name="Morisaki N."/>
            <person name="Saito Y."/>
        </authorList>
    </citation>
    <scope>NUCLEOTIDE SEQUENCE [MRNA]</scope>
    <source>
        <strain>Wistar</strain>
        <tissue>Aorta</tissue>
    </source>
</reference>
<reference key="3">
    <citation type="submission" date="1997-07" db="EMBL/GenBank/DDBJ databases">
        <title>Proviral integration into the procollagen C-proteinase enhancer protein gene and its effects in cultured rat fibroblasts revealed by an excisable 'hit-and-run' retroviral vector.</title>
        <authorList>
            <person name="Masuda M."/>
            <person name="Igarashi H."/>
            <person name="Kano M."/>
            <person name="Yoshikura H."/>
        </authorList>
    </citation>
    <scope>NUCLEOTIDE SEQUENCE [GENOMIC DNA / MRNA]</scope>
    <source>
        <strain>Fischer 344</strain>
    </source>
</reference>
<reference key="4">
    <citation type="journal article" date="1990" name="Biochem. Biophys. Res. Commun.">
        <title>Procollagen type I C-proteinase enhancer is a naturally occurring connective tissue glycoprotein.</title>
        <authorList>
            <person name="Kessler E."/>
            <person name="Mould A.P."/>
            <person name="Hulmes D.J.S."/>
        </authorList>
    </citation>
    <scope>TISSUE SPECIFICITY</scope>
</reference>
<reference key="5">
    <citation type="journal article" date="2006" name="Proc. Natl. Acad. Sci. U.S.A.">
        <title>Quantitative phosphoproteomics of vasopressin-sensitive renal cells: regulation of aquaporin-2 phosphorylation at two sites.</title>
        <authorList>
            <person name="Hoffert J.D."/>
            <person name="Pisitkun T."/>
            <person name="Wang G."/>
            <person name="Shen R.-F."/>
            <person name="Knepper M.A."/>
        </authorList>
    </citation>
    <scope>PHOSPHORYLATION [LARGE SCALE ANALYSIS] AT THR-41 AND SER-49</scope>
    <scope>IDENTIFICATION BY MASS SPECTROMETRY [LARGE SCALE ANALYSIS]</scope>
</reference>
<sequence>MLPAALTSLLGPFLLAWVLPLARGQTPNYTRPVFLCGGDVTGESGYVASEGFPNLYPPNKKCIWTITVPEGQTVSLSFRVFDMELHPSCRYDALEVFAGSGTSGQRLGRFCGTFRPAPVVAPGNQVTLRMTTDEGTGGRGFLLWYSGRATSGTEHQFCGGRMEKAQGTLTTPNWPESDYPPGISCSWHIIAPSNQVIMLTFGKFDVEPDTYCRYDSVSVFNGAVSDDSKRLGKFCGDKAPSPISSEGNELLVQFVSDLSVTADGFSASYRTLPRDAVEKESAPSPGEDAQHGPQSRSDPKTGTGPKVKPPSKPKVQPVEKPEGSPATQATPVAPDAPSITCPKQYKRSGTLQSNFCSSSLVVTGTVKAMVRGPGEGLTVTVSLLGVYKTGDLDLPSPASGTSLKFYVPCKQMPPMKKGASYLLMGQVEENRGPILPPESFVVLYRPNQDQILSNLSKRKCPSQPRPDA</sequence>
<keyword id="KW-1015">Disulfide bond</keyword>
<keyword id="KW-0325">Glycoprotein</keyword>
<keyword id="KW-0597">Phosphoprotein</keyword>
<keyword id="KW-1185">Reference proteome</keyword>
<keyword id="KW-0677">Repeat</keyword>
<keyword id="KW-0964">Secreted</keyword>
<keyword id="KW-0732">Signal</keyword>
<evidence type="ECO:0000250" key="1">
    <source>
        <dbReference type="UniProtKB" id="Q15113"/>
    </source>
</evidence>
<evidence type="ECO:0000250" key="2">
    <source>
        <dbReference type="UniProtKB" id="Q61398"/>
    </source>
</evidence>
<evidence type="ECO:0000255" key="3"/>
<evidence type="ECO:0000255" key="4">
    <source>
        <dbReference type="PROSITE-ProRule" id="PRU00059"/>
    </source>
</evidence>
<evidence type="ECO:0000255" key="5">
    <source>
        <dbReference type="PROSITE-ProRule" id="PRU00295"/>
    </source>
</evidence>
<evidence type="ECO:0000256" key="6">
    <source>
        <dbReference type="SAM" id="MobiDB-lite"/>
    </source>
</evidence>
<evidence type="ECO:0000269" key="7">
    <source>
    </source>
</evidence>
<evidence type="ECO:0007744" key="8">
    <source>
    </source>
</evidence>
<accession>O08628</accession>